<dbReference type="EC" id="2.3.1.-"/>
<dbReference type="EMBL" id="U14003">
    <property type="protein sequence ID" value="AAA97203.1"/>
    <property type="molecule type" value="Genomic_DNA"/>
</dbReference>
<dbReference type="EMBL" id="U00096">
    <property type="protein sequence ID" value="AAC77263.1"/>
    <property type="molecule type" value="Genomic_DNA"/>
</dbReference>
<dbReference type="EMBL" id="AP009048">
    <property type="protein sequence ID" value="BAE78299.1"/>
    <property type="molecule type" value="Genomic_DNA"/>
</dbReference>
<dbReference type="PIR" id="S56532">
    <property type="entry name" value="S56532"/>
</dbReference>
<dbReference type="RefSeq" id="NP_418727.1">
    <property type="nucleotide sequence ID" value="NC_000913.3"/>
</dbReference>
<dbReference type="RefSeq" id="WP_001309181.1">
    <property type="nucleotide sequence ID" value="NZ_SSUV01000012.1"/>
</dbReference>
<dbReference type="SMR" id="P39368"/>
<dbReference type="BioGRID" id="4262745">
    <property type="interactions" value="4"/>
</dbReference>
<dbReference type="FunCoup" id="P39368">
    <property type="interactions" value="203"/>
</dbReference>
<dbReference type="IntAct" id="P39368">
    <property type="interactions" value="1"/>
</dbReference>
<dbReference type="STRING" id="511145.b4307"/>
<dbReference type="PaxDb" id="511145-b4307"/>
<dbReference type="EnsemblBacteria" id="AAC77263">
    <property type="protein sequence ID" value="AAC77263"/>
    <property type="gene ID" value="b4307"/>
</dbReference>
<dbReference type="GeneID" id="949059"/>
<dbReference type="KEGG" id="ecj:JW4269"/>
<dbReference type="KEGG" id="eco:b4307"/>
<dbReference type="KEGG" id="ecoc:C3026_23240"/>
<dbReference type="PATRIC" id="fig|1411691.4.peg.2389"/>
<dbReference type="EchoBASE" id="EB2447"/>
<dbReference type="eggNOG" id="COG3153">
    <property type="taxonomic scope" value="Bacteria"/>
</dbReference>
<dbReference type="HOGENOM" id="CLU_081840_3_1_6"/>
<dbReference type="InParanoid" id="P39368"/>
<dbReference type="OMA" id="EAFWDVY"/>
<dbReference type="OrthoDB" id="9797178at2"/>
<dbReference type="PhylomeDB" id="P39368"/>
<dbReference type="BioCyc" id="EcoCyc:G7917-MONOMER"/>
<dbReference type="PRO" id="PR:P39368"/>
<dbReference type="Proteomes" id="UP000000625">
    <property type="component" value="Chromosome"/>
</dbReference>
<dbReference type="GO" id="GO:0016747">
    <property type="term" value="F:acyltransferase activity, transferring groups other than amino-acyl groups"/>
    <property type="evidence" value="ECO:0000318"/>
    <property type="project" value="GO_Central"/>
</dbReference>
<dbReference type="CDD" id="cd04301">
    <property type="entry name" value="NAT_SF"/>
    <property type="match status" value="1"/>
</dbReference>
<dbReference type="Gene3D" id="3.40.630.30">
    <property type="match status" value="1"/>
</dbReference>
<dbReference type="InterPro" id="IPR016181">
    <property type="entry name" value="Acyl_CoA_acyltransferase"/>
</dbReference>
<dbReference type="InterPro" id="IPR000182">
    <property type="entry name" value="GNAT_dom"/>
</dbReference>
<dbReference type="Pfam" id="PF00583">
    <property type="entry name" value="Acetyltransf_1"/>
    <property type="match status" value="1"/>
</dbReference>
<dbReference type="SUPFAM" id="SSF55729">
    <property type="entry name" value="Acyl-CoA N-acyltransferases (Nat)"/>
    <property type="match status" value="1"/>
</dbReference>
<dbReference type="PROSITE" id="PS51186">
    <property type="entry name" value="GNAT"/>
    <property type="match status" value="1"/>
</dbReference>
<comment type="similarity">
    <text evidence="2">Belongs to the acetyltransferase family.</text>
</comment>
<sequence length="181" mass="19957">MTVHHFTFHITDKSDASDIREVETRAFGFSKEADLVASLLEDESARPALSLLARYEGKAVGHILFTRATFKGEMDSPLMHILAPLAVIPEYQGMGVGGRLIRTGIEHLRLMGCQTVFVLGHATYYPRHGFEPCAGDKGYPAPYPIPEEHKACWMMQSLTAQPMTLTGHIRCADPDETGALT</sequence>
<feature type="chain" id="PRO_0000074619" description="Uncharacterized N-acetyltransferase YjhQ">
    <location>
        <begin position="1"/>
        <end position="181"/>
    </location>
</feature>
<feature type="domain" description="N-acetyltransferase" evidence="1">
    <location>
        <begin position="1"/>
        <end position="159"/>
    </location>
</feature>
<gene>
    <name type="primary">yjhQ</name>
    <name type="ordered locus">b4307</name>
    <name type="ordered locus">JW4269</name>
</gene>
<evidence type="ECO:0000255" key="1">
    <source>
        <dbReference type="PROSITE-ProRule" id="PRU00532"/>
    </source>
</evidence>
<evidence type="ECO:0000305" key="2"/>
<protein>
    <recommendedName>
        <fullName>Uncharacterized N-acetyltransferase YjhQ</fullName>
        <ecNumber>2.3.1.-</ecNumber>
    </recommendedName>
</protein>
<reference key="1">
    <citation type="journal article" date="1995" name="Nucleic Acids Res.">
        <title>Analysis of the Escherichia coli genome VI: DNA sequence of the region from 92.8 through 100 minutes.</title>
        <authorList>
            <person name="Burland V.D."/>
            <person name="Plunkett G. III"/>
            <person name="Sofia H.J."/>
            <person name="Daniels D.L."/>
            <person name="Blattner F.R."/>
        </authorList>
    </citation>
    <scope>NUCLEOTIDE SEQUENCE [LARGE SCALE GENOMIC DNA]</scope>
    <source>
        <strain>K12 / MG1655 / ATCC 47076</strain>
    </source>
</reference>
<reference key="2">
    <citation type="journal article" date="1997" name="Science">
        <title>The complete genome sequence of Escherichia coli K-12.</title>
        <authorList>
            <person name="Blattner F.R."/>
            <person name="Plunkett G. III"/>
            <person name="Bloch C.A."/>
            <person name="Perna N.T."/>
            <person name="Burland V."/>
            <person name="Riley M."/>
            <person name="Collado-Vides J."/>
            <person name="Glasner J.D."/>
            <person name="Rode C.K."/>
            <person name="Mayhew G.F."/>
            <person name="Gregor J."/>
            <person name="Davis N.W."/>
            <person name="Kirkpatrick H.A."/>
            <person name="Goeden M.A."/>
            <person name="Rose D.J."/>
            <person name="Mau B."/>
            <person name="Shao Y."/>
        </authorList>
    </citation>
    <scope>NUCLEOTIDE SEQUENCE [LARGE SCALE GENOMIC DNA]</scope>
    <source>
        <strain>K12 / MG1655 / ATCC 47076</strain>
    </source>
</reference>
<reference key="3">
    <citation type="journal article" date="2006" name="Mol. Syst. Biol.">
        <title>Highly accurate genome sequences of Escherichia coli K-12 strains MG1655 and W3110.</title>
        <authorList>
            <person name="Hayashi K."/>
            <person name="Morooka N."/>
            <person name="Yamamoto Y."/>
            <person name="Fujita K."/>
            <person name="Isono K."/>
            <person name="Choi S."/>
            <person name="Ohtsubo E."/>
            <person name="Baba T."/>
            <person name="Wanner B.L."/>
            <person name="Mori H."/>
            <person name="Horiuchi T."/>
        </authorList>
    </citation>
    <scope>NUCLEOTIDE SEQUENCE [LARGE SCALE GENOMIC DNA]</scope>
    <source>
        <strain>K12 / W3110 / ATCC 27325 / DSM 5911</strain>
    </source>
</reference>
<keyword id="KW-0012">Acyltransferase</keyword>
<keyword id="KW-1185">Reference proteome</keyword>
<keyword id="KW-0808">Transferase</keyword>
<name>YJHQ_ECOLI</name>
<organism>
    <name type="scientific">Escherichia coli (strain K12)</name>
    <dbReference type="NCBI Taxonomy" id="83333"/>
    <lineage>
        <taxon>Bacteria</taxon>
        <taxon>Pseudomonadati</taxon>
        <taxon>Pseudomonadota</taxon>
        <taxon>Gammaproteobacteria</taxon>
        <taxon>Enterobacterales</taxon>
        <taxon>Enterobacteriaceae</taxon>
        <taxon>Escherichia</taxon>
    </lineage>
</organism>
<proteinExistence type="inferred from homology"/>
<accession>P39368</accession>
<accession>Q2M607</accession>